<dbReference type="EC" id="4.1.3.1" evidence="1"/>
<dbReference type="EMBL" id="L37751">
    <property type="protein sequence ID" value="AAA56819.1"/>
    <property type="molecule type" value="mRNA"/>
</dbReference>
<dbReference type="PIR" id="JA0155">
    <property type="entry name" value="JA0155"/>
</dbReference>
<dbReference type="SMR" id="P20699"/>
<dbReference type="UniPathway" id="UPA00703">
    <property type="reaction ID" value="UER00719"/>
</dbReference>
<dbReference type="GO" id="GO:0009514">
    <property type="term" value="C:glyoxysome"/>
    <property type="evidence" value="ECO:0007669"/>
    <property type="project" value="UniProtKB-SubCell"/>
</dbReference>
<dbReference type="GO" id="GO:0004451">
    <property type="term" value="F:isocitrate lyase activity"/>
    <property type="evidence" value="ECO:0007669"/>
    <property type="project" value="UniProtKB-EC"/>
</dbReference>
<dbReference type="GO" id="GO:0006097">
    <property type="term" value="P:glyoxylate cycle"/>
    <property type="evidence" value="ECO:0007669"/>
    <property type="project" value="UniProtKB-UniPathway"/>
</dbReference>
<dbReference type="GO" id="GO:0006099">
    <property type="term" value="P:tricarboxylic acid cycle"/>
    <property type="evidence" value="ECO:0007669"/>
    <property type="project" value="UniProtKB-KW"/>
</dbReference>
<dbReference type="Gene3D" id="3.20.20.60">
    <property type="entry name" value="Phosphoenolpyruvate-binding domains"/>
    <property type="match status" value="1"/>
</dbReference>
<dbReference type="InterPro" id="IPR006254">
    <property type="entry name" value="Isocitrate_lyase"/>
</dbReference>
<dbReference type="InterPro" id="IPR015813">
    <property type="entry name" value="Pyrv/PenolPyrv_kinase-like_dom"/>
</dbReference>
<dbReference type="InterPro" id="IPR040442">
    <property type="entry name" value="Pyrv_kinase-like_dom_sf"/>
</dbReference>
<dbReference type="PANTHER" id="PTHR21631:SF3">
    <property type="entry name" value="BIFUNCTIONAL GLYOXYLATE CYCLE PROTEIN"/>
    <property type="match status" value="1"/>
</dbReference>
<dbReference type="PANTHER" id="PTHR21631">
    <property type="entry name" value="ISOCITRATE LYASE/MALATE SYNTHASE"/>
    <property type="match status" value="1"/>
</dbReference>
<dbReference type="Pfam" id="PF00463">
    <property type="entry name" value="ICL"/>
    <property type="match status" value="1"/>
</dbReference>
<dbReference type="SUPFAM" id="SSF51621">
    <property type="entry name" value="Phosphoenolpyruvate/pyruvate domain"/>
    <property type="match status" value="1"/>
</dbReference>
<sequence>TRGMLAYVEKIQREERKHGVDTLAHQKWSGANYYDRVLRTVQGGMTSTAAMGKGVTEE</sequence>
<protein>
    <recommendedName>
        <fullName evidence="1">Isocitrate lyase</fullName>
        <shortName evidence="1">ICL</shortName>
        <ecNumber evidence="1">4.1.3.1</ecNumber>
    </recommendedName>
    <alternativeName>
        <fullName evidence="1">Isocitrase</fullName>
    </alternativeName>
    <alternativeName>
        <fullName evidence="1">Isocitratsysase</fullName>
    </alternativeName>
</protein>
<keyword id="KW-0329">Glyoxylate bypass</keyword>
<keyword id="KW-0330">Glyoxysome</keyword>
<keyword id="KW-0456">Lyase</keyword>
<keyword id="KW-0576">Peroxisome</keyword>
<keyword id="KW-0816">Tricarboxylic acid cycle</keyword>
<comment type="function">
    <text evidence="1">Involved in storage lipid mobilization during the growth of higher plant seedling.</text>
</comment>
<comment type="catalytic activity">
    <reaction evidence="1">
        <text>D-threo-isocitrate = glyoxylate + succinate</text>
        <dbReference type="Rhea" id="RHEA:13245"/>
        <dbReference type="ChEBI" id="CHEBI:15562"/>
        <dbReference type="ChEBI" id="CHEBI:30031"/>
        <dbReference type="ChEBI" id="CHEBI:36655"/>
        <dbReference type="EC" id="4.1.3.1"/>
    </reaction>
</comment>
<comment type="cofactor">
    <cofactor evidence="2">
        <name>Mg(2+)</name>
        <dbReference type="ChEBI" id="CHEBI:18420"/>
    </cofactor>
</comment>
<comment type="pathway">
    <text evidence="1">Carbohydrate metabolism; glyoxylate cycle; (S)-malate from isocitrate: step 1/2.</text>
</comment>
<comment type="subunit">
    <text evidence="1">Homotetramer.</text>
</comment>
<comment type="subcellular location">
    <subcellularLocation>
        <location evidence="1">Glyoxysome</location>
    </subcellularLocation>
</comment>
<comment type="similarity">
    <text evidence="3">Belongs to the isocitrate lyase/PEP mutase superfamily. Isocitrate lyase family.</text>
</comment>
<feature type="chain" id="PRO_0000068807" description="Isocitrate lyase">
    <location>
        <begin position="1" status="less than"/>
        <end position="58" status="greater than"/>
    </location>
</feature>
<feature type="non-terminal residue">
    <location>
        <position position="1"/>
    </location>
</feature>
<feature type="non-terminal residue">
    <location>
        <position position="58"/>
    </location>
</feature>
<evidence type="ECO:0000250" key="1">
    <source>
        <dbReference type="UniProtKB" id="P28297"/>
    </source>
</evidence>
<evidence type="ECO:0000250" key="2">
    <source>
        <dbReference type="UniProtKB" id="P9WKK7"/>
    </source>
</evidence>
<evidence type="ECO:0000305" key="3"/>
<proteinExistence type="evidence at transcript level"/>
<accession>P20699</accession>
<reference key="1">
    <citation type="journal article" date="1988" name="Plant Physiol.">
        <title>Regulation of isocitrate lyase gene expression in sunflower.</title>
        <authorList>
            <person name="Allen R.D."/>
            <person name="Trelease R.N."/>
            <person name="Thomas T.L."/>
        </authorList>
    </citation>
    <scope>NUCLEOTIDE SEQUENCE [MRNA]</scope>
    <source>
        <strain>cv. Giant grey stripe</strain>
        <tissue>Seedling</tissue>
    </source>
</reference>
<organism>
    <name type="scientific">Helianthus annuus</name>
    <name type="common">Common sunflower</name>
    <dbReference type="NCBI Taxonomy" id="4232"/>
    <lineage>
        <taxon>Eukaryota</taxon>
        <taxon>Viridiplantae</taxon>
        <taxon>Streptophyta</taxon>
        <taxon>Embryophyta</taxon>
        <taxon>Tracheophyta</taxon>
        <taxon>Spermatophyta</taxon>
        <taxon>Magnoliopsida</taxon>
        <taxon>eudicotyledons</taxon>
        <taxon>Gunneridae</taxon>
        <taxon>Pentapetalae</taxon>
        <taxon>asterids</taxon>
        <taxon>campanulids</taxon>
        <taxon>Asterales</taxon>
        <taxon>Asteraceae</taxon>
        <taxon>Asteroideae</taxon>
        <taxon>Heliantheae alliance</taxon>
        <taxon>Heliantheae</taxon>
        <taxon>Helianthus</taxon>
    </lineage>
</organism>
<name>ACEA_HELAN</name>